<organism>
    <name type="scientific">Burkholderia orbicola (strain AU 1054)</name>
    <dbReference type="NCBI Taxonomy" id="331271"/>
    <lineage>
        <taxon>Bacteria</taxon>
        <taxon>Pseudomonadati</taxon>
        <taxon>Pseudomonadota</taxon>
        <taxon>Betaproteobacteria</taxon>
        <taxon>Burkholderiales</taxon>
        <taxon>Burkholderiaceae</taxon>
        <taxon>Burkholderia</taxon>
        <taxon>Burkholderia cepacia complex</taxon>
        <taxon>Burkholderia orbicola</taxon>
    </lineage>
</organism>
<proteinExistence type="inferred from homology"/>
<gene>
    <name evidence="1" type="primary">rpmD</name>
    <name type="ordered locus">Bcen_2741</name>
</gene>
<comment type="subunit">
    <text evidence="1">Part of the 50S ribosomal subunit.</text>
</comment>
<comment type="similarity">
    <text evidence="1">Belongs to the universal ribosomal protein uL30 family.</text>
</comment>
<name>RL30_BURO1</name>
<feature type="chain" id="PRO_0000273756" description="Large ribosomal subunit protein uL30">
    <location>
        <begin position="1"/>
        <end position="60"/>
    </location>
</feature>
<evidence type="ECO:0000255" key="1">
    <source>
        <dbReference type="HAMAP-Rule" id="MF_01371"/>
    </source>
</evidence>
<evidence type="ECO:0000305" key="2"/>
<protein>
    <recommendedName>
        <fullName evidence="1">Large ribosomal subunit protein uL30</fullName>
    </recommendedName>
    <alternativeName>
        <fullName evidence="2">50S ribosomal protein L30</fullName>
    </alternativeName>
</protein>
<reference key="1">
    <citation type="submission" date="2006-05" db="EMBL/GenBank/DDBJ databases">
        <title>Complete sequence of chromosome 1 of Burkholderia cenocepacia AU 1054.</title>
        <authorList>
            <consortium name="US DOE Joint Genome Institute"/>
            <person name="Copeland A."/>
            <person name="Lucas S."/>
            <person name="Lapidus A."/>
            <person name="Barry K."/>
            <person name="Detter J.C."/>
            <person name="Glavina del Rio T."/>
            <person name="Hammon N."/>
            <person name="Israni S."/>
            <person name="Dalin E."/>
            <person name="Tice H."/>
            <person name="Pitluck S."/>
            <person name="Chain P."/>
            <person name="Malfatti S."/>
            <person name="Shin M."/>
            <person name="Vergez L."/>
            <person name="Schmutz J."/>
            <person name="Larimer F."/>
            <person name="Land M."/>
            <person name="Hauser L."/>
            <person name="Kyrpides N."/>
            <person name="Lykidis A."/>
            <person name="LiPuma J.J."/>
            <person name="Konstantinidis K."/>
            <person name="Tiedje J.M."/>
            <person name="Richardson P."/>
        </authorList>
    </citation>
    <scope>NUCLEOTIDE SEQUENCE [LARGE SCALE GENOMIC DNA]</scope>
    <source>
        <strain>AU 1054</strain>
    </source>
</reference>
<keyword id="KW-0687">Ribonucleoprotein</keyword>
<keyword id="KW-0689">Ribosomal protein</keyword>
<sequence length="60" mass="6635">MSEKTVKVQLVKSLIGTRESHRATVRGLGLRRLNSVSELQDTPAVRGMINKVSYLVKVIA</sequence>
<dbReference type="EMBL" id="CP000378">
    <property type="protein sequence ID" value="ABF77639.1"/>
    <property type="molecule type" value="Genomic_DNA"/>
</dbReference>
<dbReference type="SMR" id="Q1BRW6"/>
<dbReference type="HOGENOM" id="CLU_131047_1_4_4"/>
<dbReference type="GO" id="GO:0022625">
    <property type="term" value="C:cytosolic large ribosomal subunit"/>
    <property type="evidence" value="ECO:0007669"/>
    <property type="project" value="TreeGrafter"/>
</dbReference>
<dbReference type="GO" id="GO:0003735">
    <property type="term" value="F:structural constituent of ribosome"/>
    <property type="evidence" value="ECO:0007669"/>
    <property type="project" value="InterPro"/>
</dbReference>
<dbReference type="GO" id="GO:0006412">
    <property type="term" value="P:translation"/>
    <property type="evidence" value="ECO:0007669"/>
    <property type="project" value="UniProtKB-UniRule"/>
</dbReference>
<dbReference type="CDD" id="cd01658">
    <property type="entry name" value="Ribosomal_L30"/>
    <property type="match status" value="1"/>
</dbReference>
<dbReference type="FunFam" id="3.30.1390.20:FF:000001">
    <property type="entry name" value="50S ribosomal protein L30"/>
    <property type="match status" value="1"/>
</dbReference>
<dbReference type="Gene3D" id="3.30.1390.20">
    <property type="entry name" value="Ribosomal protein L30, ferredoxin-like fold domain"/>
    <property type="match status" value="1"/>
</dbReference>
<dbReference type="HAMAP" id="MF_01371_B">
    <property type="entry name" value="Ribosomal_uL30_B"/>
    <property type="match status" value="1"/>
</dbReference>
<dbReference type="InterPro" id="IPR036919">
    <property type="entry name" value="Ribo_uL30_ferredoxin-like_sf"/>
</dbReference>
<dbReference type="InterPro" id="IPR005996">
    <property type="entry name" value="Ribosomal_uL30_bac-type"/>
</dbReference>
<dbReference type="InterPro" id="IPR016082">
    <property type="entry name" value="Ribosomal_uL30_ferredoxin-like"/>
</dbReference>
<dbReference type="NCBIfam" id="TIGR01308">
    <property type="entry name" value="rpmD_bact"/>
    <property type="match status" value="1"/>
</dbReference>
<dbReference type="PANTHER" id="PTHR15892:SF2">
    <property type="entry name" value="LARGE RIBOSOMAL SUBUNIT PROTEIN UL30M"/>
    <property type="match status" value="1"/>
</dbReference>
<dbReference type="PANTHER" id="PTHR15892">
    <property type="entry name" value="MITOCHONDRIAL RIBOSOMAL PROTEIN L30"/>
    <property type="match status" value="1"/>
</dbReference>
<dbReference type="Pfam" id="PF00327">
    <property type="entry name" value="Ribosomal_L30"/>
    <property type="match status" value="1"/>
</dbReference>
<dbReference type="PIRSF" id="PIRSF002211">
    <property type="entry name" value="Ribosomal_L30_bac-type"/>
    <property type="match status" value="1"/>
</dbReference>
<dbReference type="SUPFAM" id="SSF55129">
    <property type="entry name" value="Ribosomal protein L30p/L7e"/>
    <property type="match status" value="1"/>
</dbReference>
<accession>Q1BRW6</accession>